<gene>
    <name evidence="1" type="primary">petG</name>
</gene>
<proteinExistence type="inferred from homology"/>
<evidence type="ECO:0000255" key="1">
    <source>
        <dbReference type="HAMAP-Rule" id="MF_00432"/>
    </source>
</evidence>
<sequence>MVEPLLSGIVLGLVPVTIAGLFVTAYLQYRRGDLATF</sequence>
<geneLocation type="chloroplast"/>
<keyword id="KW-0150">Chloroplast</keyword>
<keyword id="KW-0249">Electron transport</keyword>
<keyword id="KW-0472">Membrane</keyword>
<keyword id="KW-0602">Photosynthesis</keyword>
<keyword id="KW-0934">Plastid</keyword>
<keyword id="KW-0793">Thylakoid</keyword>
<keyword id="KW-0812">Transmembrane</keyword>
<keyword id="KW-1133">Transmembrane helix</keyword>
<keyword id="KW-0813">Transport</keyword>
<organism>
    <name type="scientific">Chlamydomonas moewusii</name>
    <name type="common">Chlamydomonas eugametos</name>
    <dbReference type="NCBI Taxonomy" id="3054"/>
    <lineage>
        <taxon>Eukaryota</taxon>
        <taxon>Viridiplantae</taxon>
        <taxon>Chlorophyta</taxon>
        <taxon>core chlorophytes</taxon>
        <taxon>Chlorophyceae</taxon>
        <taxon>CS clade</taxon>
        <taxon>Chlamydomonadales</taxon>
        <taxon>Chlamydomonadaceae</taxon>
        <taxon>Chlamydomonas</taxon>
    </lineage>
</organism>
<accession>P46304</accession>
<dbReference type="EMBL" id="L29282">
    <property type="protein sequence ID" value="AAA84158.1"/>
    <property type="molecule type" value="Genomic_DNA"/>
</dbReference>
<dbReference type="PIR" id="S51367">
    <property type="entry name" value="S51367"/>
</dbReference>
<dbReference type="SMR" id="P46304"/>
<dbReference type="GO" id="GO:0009535">
    <property type="term" value="C:chloroplast thylakoid membrane"/>
    <property type="evidence" value="ECO:0007669"/>
    <property type="project" value="UniProtKB-SubCell"/>
</dbReference>
<dbReference type="GO" id="GO:0009512">
    <property type="term" value="C:cytochrome b6f complex"/>
    <property type="evidence" value="ECO:0007669"/>
    <property type="project" value="InterPro"/>
</dbReference>
<dbReference type="GO" id="GO:0045158">
    <property type="term" value="F:electron transporter, transferring electrons within cytochrome b6/f complex of photosystem II activity"/>
    <property type="evidence" value="ECO:0007669"/>
    <property type="project" value="UniProtKB-UniRule"/>
</dbReference>
<dbReference type="GO" id="GO:0017004">
    <property type="term" value="P:cytochrome complex assembly"/>
    <property type="evidence" value="ECO:0007669"/>
    <property type="project" value="UniProtKB-UniRule"/>
</dbReference>
<dbReference type="GO" id="GO:0015979">
    <property type="term" value="P:photosynthesis"/>
    <property type="evidence" value="ECO:0007669"/>
    <property type="project" value="UniProtKB-KW"/>
</dbReference>
<dbReference type="HAMAP" id="MF_00432">
    <property type="entry name" value="Cytb6_f_PetG"/>
    <property type="match status" value="1"/>
</dbReference>
<dbReference type="InterPro" id="IPR003683">
    <property type="entry name" value="Cyt_6/f_cplx_su5"/>
</dbReference>
<dbReference type="InterPro" id="IPR036099">
    <property type="entry name" value="Cyt_6/f_cplx_su5_sf"/>
</dbReference>
<dbReference type="NCBIfam" id="NF001907">
    <property type="entry name" value="PRK00665.1"/>
    <property type="match status" value="1"/>
</dbReference>
<dbReference type="Pfam" id="PF02529">
    <property type="entry name" value="PetG"/>
    <property type="match status" value="1"/>
</dbReference>
<dbReference type="PIRSF" id="PIRSF000034">
    <property type="entry name" value="Cyt_b6-f_V"/>
    <property type="match status" value="1"/>
</dbReference>
<dbReference type="SUPFAM" id="SSF103446">
    <property type="entry name" value="PetG subunit of the cytochrome b6f complex"/>
    <property type="match status" value="1"/>
</dbReference>
<feature type="chain" id="PRO_0000216375" description="Cytochrome b6-f complex subunit 5">
    <location>
        <begin position="1"/>
        <end position="37"/>
    </location>
</feature>
<feature type="transmembrane region" description="Helical" evidence="1">
    <location>
        <begin position="5"/>
        <end position="25"/>
    </location>
</feature>
<comment type="function">
    <text evidence="1">Component of the cytochrome b6-f complex, which mediates electron transfer between photosystem II (PSII) and photosystem I (PSI), cyclic electron flow around PSI, and state transitions. PetG is required for either the stability or assembly of the cytochrome b6-f complex.</text>
</comment>
<comment type="subunit">
    <text evidence="1">The 4 large subunits of the cytochrome b6-f complex are cytochrome b6, subunit IV (17 kDa polypeptide, PetD), cytochrome f and the Rieske protein, while the 4 small subunits are PetG, PetL, PetM and PetN. The complex functions as a dimer.</text>
</comment>
<comment type="subcellular location">
    <subcellularLocation>
        <location evidence="1">Plastid</location>
        <location evidence="1">Chloroplast thylakoid membrane</location>
        <topology evidence="1">Single-pass membrane protein</topology>
    </subcellularLocation>
</comment>
<comment type="similarity">
    <text evidence="1">Belongs to the PetG family.</text>
</comment>
<name>PETG_CHLMO</name>
<protein>
    <recommendedName>
        <fullName evidence="1">Cytochrome b6-f complex subunit 5</fullName>
    </recommendedName>
    <alternativeName>
        <fullName evidence="1">Cytochrome b6-f complex subunit PetG</fullName>
    </alternativeName>
    <alternativeName>
        <fullName evidence="1">Cytochrome b6-f complex subunit V</fullName>
    </alternativeName>
</protein>
<reference key="1">
    <citation type="journal article" date="1994" name="Curr. Genet.">
        <title>The chloroplast gene cluster containing psbF, psbL, petG and rps3 is conserved in Chlamydomonas.</title>
        <authorList>
            <person name="Turmel M."/>
            <person name="Otis C."/>
        </authorList>
    </citation>
    <scope>NUCLEOTIDE SEQUENCE [GENOMIC DNA]</scope>
</reference>